<feature type="chain" id="PRO_0000237768" description="2-C-methyl-D-erythritol 4-phosphate cytidylyltransferase">
    <location>
        <begin position="1"/>
        <end position="228"/>
    </location>
</feature>
<feature type="site" description="Transition state stabilizer" evidence="1">
    <location>
        <position position="13"/>
    </location>
</feature>
<feature type="site" description="Transition state stabilizer" evidence="1">
    <location>
        <position position="20"/>
    </location>
</feature>
<feature type="site" description="Positions MEP for the nucleophilic attack" evidence="1">
    <location>
        <position position="152"/>
    </location>
</feature>
<feature type="site" description="Positions MEP for the nucleophilic attack" evidence="1">
    <location>
        <position position="208"/>
    </location>
</feature>
<protein>
    <recommendedName>
        <fullName evidence="1">2-C-methyl-D-erythritol 4-phosphate cytidylyltransferase</fullName>
        <ecNumber evidence="1">2.7.7.60</ecNumber>
    </recommendedName>
    <alternativeName>
        <fullName evidence="1">4-diphosphocytidyl-2C-methyl-D-erythritol synthase</fullName>
    </alternativeName>
    <alternativeName>
        <fullName evidence="1">MEP cytidylyltransferase</fullName>
        <shortName evidence="1">MCT</shortName>
    </alternativeName>
</protein>
<evidence type="ECO:0000255" key="1">
    <source>
        <dbReference type="HAMAP-Rule" id="MF_00108"/>
    </source>
</evidence>
<proteinExistence type="inferred from homology"/>
<dbReference type="EC" id="2.7.7.60" evidence="1"/>
<dbReference type="EMBL" id="CP000117">
    <property type="protein sequence ID" value="ABA22031.1"/>
    <property type="molecule type" value="Genomic_DNA"/>
</dbReference>
<dbReference type="SMR" id="Q3MAF5"/>
<dbReference type="STRING" id="240292.Ava_2414"/>
<dbReference type="KEGG" id="ava:Ava_2414"/>
<dbReference type="eggNOG" id="COG1211">
    <property type="taxonomic scope" value="Bacteria"/>
</dbReference>
<dbReference type="HOGENOM" id="CLU_061281_1_0_3"/>
<dbReference type="UniPathway" id="UPA00056">
    <property type="reaction ID" value="UER00093"/>
</dbReference>
<dbReference type="Proteomes" id="UP000002533">
    <property type="component" value="Chromosome"/>
</dbReference>
<dbReference type="GO" id="GO:0050518">
    <property type="term" value="F:2-C-methyl-D-erythritol 4-phosphate cytidylyltransferase activity"/>
    <property type="evidence" value="ECO:0007669"/>
    <property type="project" value="UniProtKB-UniRule"/>
</dbReference>
<dbReference type="GO" id="GO:0019288">
    <property type="term" value="P:isopentenyl diphosphate biosynthetic process, methylerythritol 4-phosphate pathway"/>
    <property type="evidence" value="ECO:0007669"/>
    <property type="project" value="UniProtKB-UniRule"/>
</dbReference>
<dbReference type="CDD" id="cd02516">
    <property type="entry name" value="CDP-ME_synthetase"/>
    <property type="match status" value="1"/>
</dbReference>
<dbReference type="FunFam" id="3.90.550.10:FF:000003">
    <property type="entry name" value="2-C-methyl-D-erythritol 4-phosphate cytidylyltransferase"/>
    <property type="match status" value="1"/>
</dbReference>
<dbReference type="Gene3D" id="3.90.550.10">
    <property type="entry name" value="Spore Coat Polysaccharide Biosynthesis Protein SpsA, Chain A"/>
    <property type="match status" value="1"/>
</dbReference>
<dbReference type="HAMAP" id="MF_00108">
    <property type="entry name" value="IspD"/>
    <property type="match status" value="1"/>
</dbReference>
<dbReference type="InterPro" id="IPR001228">
    <property type="entry name" value="IspD"/>
</dbReference>
<dbReference type="InterPro" id="IPR034683">
    <property type="entry name" value="IspD/TarI"/>
</dbReference>
<dbReference type="InterPro" id="IPR050088">
    <property type="entry name" value="IspD/TarI_cytidylyltransf_bact"/>
</dbReference>
<dbReference type="InterPro" id="IPR018294">
    <property type="entry name" value="ISPD_synthase_CS"/>
</dbReference>
<dbReference type="InterPro" id="IPR029044">
    <property type="entry name" value="Nucleotide-diphossugar_trans"/>
</dbReference>
<dbReference type="NCBIfam" id="TIGR00453">
    <property type="entry name" value="ispD"/>
    <property type="match status" value="1"/>
</dbReference>
<dbReference type="PANTHER" id="PTHR32125">
    <property type="entry name" value="2-C-METHYL-D-ERYTHRITOL 4-PHOSPHATE CYTIDYLYLTRANSFERASE, CHLOROPLASTIC"/>
    <property type="match status" value="1"/>
</dbReference>
<dbReference type="PANTHER" id="PTHR32125:SF4">
    <property type="entry name" value="2-C-METHYL-D-ERYTHRITOL 4-PHOSPHATE CYTIDYLYLTRANSFERASE, CHLOROPLASTIC"/>
    <property type="match status" value="1"/>
</dbReference>
<dbReference type="Pfam" id="PF01128">
    <property type="entry name" value="IspD"/>
    <property type="match status" value="1"/>
</dbReference>
<dbReference type="SUPFAM" id="SSF53448">
    <property type="entry name" value="Nucleotide-diphospho-sugar transferases"/>
    <property type="match status" value="1"/>
</dbReference>
<dbReference type="PROSITE" id="PS01295">
    <property type="entry name" value="ISPD"/>
    <property type="match status" value="1"/>
</dbReference>
<name>ISPD_TRIV2</name>
<keyword id="KW-0414">Isoprene biosynthesis</keyword>
<keyword id="KW-0548">Nucleotidyltransferase</keyword>
<keyword id="KW-0808">Transferase</keyword>
<organism>
    <name type="scientific">Trichormus variabilis (strain ATCC 29413 / PCC 7937)</name>
    <name type="common">Anabaena variabilis</name>
    <dbReference type="NCBI Taxonomy" id="240292"/>
    <lineage>
        <taxon>Bacteria</taxon>
        <taxon>Bacillati</taxon>
        <taxon>Cyanobacteriota</taxon>
        <taxon>Cyanophyceae</taxon>
        <taxon>Nostocales</taxon>
        <taxon>Nostocaceae</taxon>
        <taxon>Trichormus</taxon>
    </lineage>
</organism>
<gene>
    <name evidence="1" type="primary">ispD</name>
    <name type="ordered locus">Ava_2414</name>
</gene>
<accession>Q3MAF5</accession>
<reference key="1">
    <citation type="journal article" date="2014" name="Stand. Genomic Sci.">
        <title>Complete genome sequence of Anabaena variabilis ATCC 29413.</title>
        <authorList>
            <person name="Thiel T."/>
            <person name="Pratte B.S."/>
            <person name="Zhong J."/>
            <person name="Goodwin L."/>
            <person name="Copeland A."/>
            <person name="Lucas S."/>
            <person name="Han C."/>
            <person name="Pitluck S."/>
            <person name="Land M.L."/>
            <person name="Kyrpides N.C."/>
            <person name="Woyke T."/>
        </authorList>
    </citation>
    <scope>NUCLEOTIDE SEQUENCE [LARGE SCALE GENOMIC DNA]</scope>
    <source>
        <strain>ATCC 29413 / PCC 7937</strain>
    </source>
</reference>
<sequence length="228" mass="24854">MYLLIPAAGVGKRMGCDRNKLLLEVRSQPIIAWTLLAAQAASEISWIGIISQPTDWPDFKSILANLQLTKPVEFILGGSTRQESVYNGLQALPKAAEQVLIHDGARCLATPNLLNSCAQAIRHCSGLIAAVPVKDTIKVADEDGIIQSTPDRRNLWAAQTPQGFNVELLKQCHAEGVRQGWEVTDDAALFEKCGIEVQIVEGEETNLKVTTPQDLAIAEFILNSRDNS</sequence>
<comment type="function">
    <text evidence="1">Catalyzes the formation of 4-diphosphocytidyl-2-C-methyl-D-erythritol from CTP and 2-C-methyl-D-erythritol 4-phosphate (MEP).</text>
</comment>
<comment type="catalytic activity">
    <reaction evidence="1">
        <text>2-C-methyl-D-erythritol 4-phosphate + CTP + H(+) = 4-CDP-2-C-methyl-D-erythritol + diphosphate</text>
        <dbReference type="Rhea" id="RHEA:13429"/>
        <dbReference type="ChEBI" id="CHEBI:15378"/>
        <dbReference type="ChEBI" id="CHEBI:33019"/>
        <dbReference type="ChEBI" id="CHEBI:37563"/>
        <dbReference type="ChEBI" id="CHEBI:57823"/>
        <dbReference type="ChEBI" id="CHEBI:58262"/>
        <dbReference type="EC" id="2.7.7.60"/>
    </reaction>
</comment>
<comment type="pathway">
    <text evidence="1">Isoprenoid biosynthesis; isopentenyl diphosphate biosynthesis via DXP pathway; isopentenyl diphosphate from 1-deoxy-D-xylulose 5-phosphate: step 2/6.</text>
</comment>
<comment type="similarity">
    <text evidence="1">Belongs to the IspD/TarI cytidylyltransferase family. IspD subfamily.</text>
</comment>